<protein>
    <recommendedName>
        <fullName>Putative antitoxin VapB21</fullName>
    </recommendedName>
</protein>
<reference key="1">
    <citation type="journal article" date="1997" name="Nature">
        <title>The complete genome sequence of the hyperthermophilic, sulphate-reducing archaeon Archaeoglobus fulgidus.</title>
        <authorList>
            <person name="Klenk H.-P."/>
            <person name="Clayton R.A."/>
            <person name="Tomb J.-F."/>
            <person name="White O."/>
            <person name="Nelson K.E."/>
            <person name="Ketchum K.A."/>
            <person name="Dodson R.J."/>
            <person name="Gwinn M.L."/>
            <person name="Hickey E.K."/>
            <person name="Peterson J.D."/>
            <person name="Richardson D.L."/>
            <person name="Kerlavage A.R."/>
            <person name="Graham D.E."/>
            <person name="Kyrpides N.C."/>
            <person name="Fleischmann R.D."/>
            <person name="Quackenbush J."/>
            <person name="Lee N.H."/>
            <person name="Sutton G.G."/>
            <person name="Gill S.R."/>
            <person name="Kirkness E.F."/>
            <person name="Dougherty B.A."/>
            <person name="McKenney K."/>
            <person name="Adams M.D."/>
            <person name="Loftus B.J."/>
            <person name="Peterson S.N."/>
            <person name="Reich C.I."/>
            <person name="McNeil L.K."/>
            <person name="Badger J.H."/>
            <person name="Glodek A."/>
            <person name="Zhou L."/>
            <person name="Overbeek R."/>
            <person name="Gocayne J.D."/>
            <person name="Weidman J.F."/>
            <person name="McDonald L.A."/>
            <person name="Utterback T.R."/>
            <person name="Cotton M.D."/>
            <person name="Spriggs T."/>
            <person name="Artiach P."/>
            <person name="Kaine B.P."/>
            <person name="Sykes S.M."/>
            <person name="Sadow P.W."/>
            <person name="D'Andrea K.P."/>
            <person name="Bowman C."/>
            <person name="Fujii C."/>
            <person name="Garland S.A."/>
            <person name="Mason T.M."/>
            <person name="Olsen G.J."/>
            <person name="Fraser C.M."/>
            <person name="Smith H.O."/>
            <person name="Woese C.R."/>
            <person name="Venter J.C."/>
        </authorList>
    </citation>
    <scope>NUCLEOTIDE SEQUENCE [LARGE SCALE GENOMIC DNA]</scope>
    <source>
        <strain>ATCC 49558 / DSM 4304 / JCM 9628 / NBRC 100126 / VC-16</strain>
    </source>
</reference>
<reference key="2">
    <citation type="journal article" date="2005" name="Nucleic Acids Res.">
        <title>Toxin-antitoxin loci are highly abundant in free-living but lost from host-associated prokaryotes.</title>
        <authorList>
            <person name="Pandey D.P."/>
            <person name="Gerdes K."/>
        </authorList>
    </citation>
    <scope>POSSIBLE FUNCTION</scope>
    <source>
        <strain>ATCC 49558 / DSM 4304 / JCM 9628 / NBRC 100126 / VC-16</strain>
    </source>
</reference>
<reference key="3">
    <citation type="submission" date="2009-02" db="PDB data bank">
        <title>NMR structure of protein Y2212_ARCFU from Archaeoglobus fulgidus; Northeast structural genomics consortium target GR83.</title>
        <authorList>
            <consortium name="Northeast structural genomics consortium (NESG)"/>
        </authorList>
    </citation>
    <scope>STRUCTURE BY NMR</scope>
</reference>
<feature type="chain" id="PRO_0000156857" description="Putative antitoxin VapB21">
    <location>
        <begin position="1"/>
        <end position="61"/>
    </location>
</feature>
<feature type="strand" evidence="2">
    <location>
        <begin position="5"/>
        <end position="10"/>
    </location>
</feature>
<feature type="strand" evidence="2">
    <location>
        <begin position="13"/>
        <end position="18"/>
    </location>
</feature>
<feature type="strand" evidence="2">
    <location>
        <begin position="27"/>
        <end position="31"/>
    </location>
</feature>
<feature type="helix" evidence="2">
    <location>
        <begin position="49"/>
        <end position="51"/>
    </location>
</feature>
<keyword id="KW-0002">3D-structure</keyword>
<keyword id="KW-1185">Reference proteome</keyword>
<keyword id="KW-1277">Toxin-antitoxin system</keyword>
<gene>
    <name type="primary">vapB21</name>
    <name type="ordered locus">AF_2212</name>
</gene>
<sequence>MPKIIEAVYENGVFKPLQKVDLKEGERVKIKLELKVEPIDLGEPVSVEEIKKIRDGTWMSS</sequence>
<dbReference type="EMBL" id="AE000782">
    <property type="protein sequence ID" value="AAB89054.1"/>
    <property type="molecule type" value="Genomic_DNA"/>
</dbReference>
<dbReference type="PIR" id="D69526">
    <property type="entry name" value="D69526"/>
</dbReference>
<dbReference type="RefSeq" id="WP_010879701.1">
    <property type="nucleotide sequence ID" value="NC_000917.1"/>
</dbReference>
<dbReference type="PDB" id="2NWT">
    <property type="method" value="NMR"/>
    <property type="chains" value="A/B=1-61"/>
</dbReference>
<dbReference type="PDBsum" id="2NWT"/>
<dbReference type="BMRB" id="O28071"/>
<dbReference type="SMR" id="O28071"/>
<dbReference type="STRING" id="224325.AF_2212"/>
<dbReference type="PaxDb" id="224325-AF_2212"/>
<dbReference type="EnsemblBacteria" id="AAB89054">
    <property type="protein sequence ID" value="AAB89054"/>
    <property type="gene ID" value="AF_2212"/>
</dbReference>
<dbReference type="GeneID" id="1485442"/>
<dbReference type="KEGG" id="afu:AF_2212"/>
<dbReference type="eggNOG" id="arCOG03880">
    <property type="taxonomic scope" value="Archaea"/>
</dbReference>
<dbReference type="HOGENOM" id="CLU_200885_3_1_2"/>
<dbReference type="OrthoDB" id="116241at2157"/>
<dbReference type="PhylomeDB" id="O28071"/>
<dbReference type="EvolutionaryTrace" id="O28071"/>
<dbReference type="Proteomes" id="UP000002199">
    <property type="component" value="Chromosome"/>
</dbReference>
<dbReference type="Gene3D" id="4.10.1150.10">
    <property type="entry name" value="AF2212/PG0164-like"/>
    <property type="match status" value="1"/>
</dbReference>
<dbReference type="InterPro" id="IPR008203">
    <property type="entry name" value="AF2212-like"/>
</dbReference>
<dbReference type="InterPro" id="IPR024069">
    <property type="entry name" value="AF2212-like_dom_sf"/>
</dbReference>
<dbReference type="Pfam" id="PF01954">
    <property type="entry name" value="AF2212-like"/>
    <property type="match status" value="1"/>
</dbReference>
<dbReference type="SUPFAM" id="SSF141694">
    <property type="entry name" value="AF2212/PG0164-like"/>
    <property type="match status" value="1"/>
</dbReference>
<comment type="function">
    <text evidence="1">Possibly the antitoxin component of a type II toxin-antitoxin (TA) system. Its cognate toxin is VapC21 (Potential).</text>
</comment>
<comment type="similarity">
    <text evidence="1">Belongs to the UPF0165 family.</text>
</comment>
<organism>
    <name type="scientific">Archaeoglobus fulgidus (strain ATCC 49558 / DSM 4304 / JCM 9628 / NBRC 100126 / VC-16)</name>
    <dbReference type="NCBI Taxonomy" id="224325"/>
    <lineage>
        <taxon>Archaea</taxon>
        <taxon>Methanobacteriati</taxon>
        <taxon>Methanobacteriota</taxon>
        <taxon>Archaeoglobi</taxon>
        <taxon>Archaeoglobales</taxon>
        <taxon>Archaeoglobaceae</taxon>
        <taxon>Archaeoglobus</taxon>
    </lineage>
</organism>
<proteinExistence type="evidence at protein level"/>
<accession>O28071</accession>
<name>VPB21_ARCFU</name>
<evidence type="ECO:0000305" key="1"/>
<evidence type="ECO:0007829" key="2">
    <source>
        <dbReference type="PDB" id="2NWT"/>
    </source>
</evidence>